<organism>
    <name type="scientific">Rhyparobia maderae</name>
    <name type="common">Madeira cockroach</name>
    <name type="synonym">Leucophaea maderae</name>
    <dbReference type="NCBI Taxonomy" id="36963"/>
    <lineage>
        <taxon>Eukaryota</taxon>
        <taxon>Metazoa</taxon>
        <taxon>Ecdysozoa</taxon>
        <taxon>Arthropoda</taxon>
        <taxon>Hexapoda</taxon>
        <taxon>Insecta</taxon>
        <taxon>Pterygota</taxon>
        <taxon>Neoptera</taxon>
        <taxon>Polyneoptera</taxon>
        <taxon>Dictyoptera</taxon>
        <taxon>Blattodea</taxon>
        <taxon>Blaberoidea</taxon>
        <taxon>Blaberidae</taxon>
        <taxon>Oxyhaloinae</taxon>
        <taxon>Rhyparobia</taxon>
    </lineage>
</organism>
<accession>P81736</accession>
<comment type="function">
    <text>Myoactive peptide. Increases the amplitude and frequency of spontaneous contractions and tonus of hindgut muscle.</text>
</comment>
<comment type="subcellular location">
    <subcellularLocation>
        <location>Secreted</location>
    </subcellularLocation>
</comment>
<comment type="tissue specificity">
    <text>Midgut.</text>
</comment>
<evidence type="ECO:0000269" key="1">
    <source>
    </source>
</evidence>
<sequence length="9" mass="953">APSGFMGMR</sequence>
<reference key="1">
    <citation type="journal article" date="1996" name="Regul. Pept.">
        <title>Isolation of five tachykinin-related peptides from the midgut of the cockroach Leucophaea maderae: existence of N-terminally extended isoforms.</title>
        <authorList>
            <person name="Muren J.E."/>
            <person name="Naessel D.R."/>
        </authorList>
    </citation>
    <scope>PROTEIN SEQUENCE</scope>
    <scope>AMIDATION AT ARG-9</scope>
    <source>
        <tissue>Midgut</tissue>
    </source>
</reference>
<dbReference type="GO" id="GO:0005576">
    <property type="term" value="C:extracellular region"/>
    <property type="evidence" value="ECO:0007669"/>
    <property type="project" value="UniProtKB-SubCell"/>
</dbReference>
<dbReference type="GO" id="GO:0007218">
    <property type="term" value="P:neuropeptide signaling pathway"/>
    <property type="evidence" value="ECO:0007669"/>
    <property type="project" value="UniProtKB-KW"/>
</dbReference>
<protein>
    <recommendedName>
        <fullName>Tachykinin-related peptide 4</fullName>
        <shortName>LemTRP 4</shortName>
    </recommendedName>
</protein>
<proteinExistence type="evidence at protein level"/>
<feature type="peptide" id="PRO_0000044439" description="Tachykinin-related peptide 4">
    <location>
        <begin position="1"/>
        <end position="9"/>
    </location>
</feature>
<feature type="modified residue" description="Arginine amide" evidence="1">
    <location>
        <position position="9"/>
    </location>
</feature>
<keyword id="KW-0027">Amidation</keyword>
<keyword id="KW-0903">Direct protein sequencing</keyword>
<keyword id="KW-0527">Neuropeptide</keyword>
<keyword id="KW-0964">Secreted</keyword>
<name>TRP4_RHYMA</name>